<feature type="signal peptide" evidence="1">
    <location>
        <begin position="1"/>
        <end position="37"/>
    </location>
</feature>
<feature type="chain" id="PRO_0000042110" description="Secretion monitor">
    <location>
        <begin position="38"/>
        <end position="165"/>
    </location>
</feature>
<accession>Q5PDD0</accession>
<organism>
    <name type="scientific">Salmonella paratyphi A (strain ATCC 9150 / SARB42)</name>
    <dbReference type="NCBI Taxonomy" id="295319"/>
    <lineage>
        <taxon>Bacteria</taxon>
        <taxon>Pseudomonadati</taxon>
        <taxon>Pseudomonadota</taxon>
        <taxon>Gammaproteobacteria</taxon>
        <taxon>Enterobacterales</taxon>
        <taxon>Enterobacteriaceae</taxon>
        <taxon>Salmonella</taxon>
    </lineage>
</organism>
<reference key="1">
    <citation type="journal article" date="2004" name="Nat. Genet.">
        <title>Comparison of genome degradation in Paratyphi A and Typhi, human-restricted serovars of Salmonella enterica that cause typhoid.</title>
        <authorList>
            <person name="McClelland M."/>
            <person name="Sanderson K.E."/>
            <person name="Clifton S.W."/>
            <person name="Latreille P."/>
            <person name="Porwollik S."/>
            <person name="Sabo A."/>
            <person name="Meyer R."/>
            <person name="Bieri T."/>
            <person name="Ozersky P."/>
            <person name="McLellan M."/>
            <person name="Harkins C.R."/>
            <person name="Wang C."/>
            <person name="Nguyen C."/>
            <person name="Berghoff A."/>
            <person name="Elliott G."/>
            <person name="Kohlberg S."/>
            <person name="Strong C."/>
            <person name="Du F."/>
            <person name="Carter J."/>
            <person name="Kremizki C."/>
            <person name="Layman D."/>
            <person name="Leonard S."/>
            <person name="Sun H."/>
            <person name="Fulton L."/>
            <person name="Nash W."/>
            <person name="Miner T."/>
            <person name="Minx P."/>
            <person name="Delehaunty K."/>
            <person name="Fronick C."/>
            <person name="Magrini V."/>
            <person name="Nhan M."/>
            <person name="Warren W."/>
            <person name="Florea L."/>
            <person name="Spieth J."/>
            <person name="Wilson R.K."/>
        </authorList>
    </citation>
    <scope>NUCLEOTIDE SEQUENCE [LARGE SCALE GENOMIC DNA]</scope>
    <source>
        <strain>ATCC 9150 / SARB42</strain>
    </source>
</reference>
<name>SECM_SALPA</name>
<proteinExistence type="inferred from homology"/>
<protein>
    <recommendedName>
        <fullName evidence="1">Secretion monitor</fullName>
    </recommendedName>
</protein>
<gene>
    <name evidence="1" type="primary">secM</name>
    <name type="ordered locus">SPA0137</name>
</gene>
<sequence>MSGILTRWRQLGRRYFWPHLLLGMVAASFGLPALSNAAETNTPARTTASTASKVNFSHLALLEASNRRPNFTVDYWHQHAIRTVIRHLSFAMAPQTLPVADAPSPLQAHHIALLNTLSAMLTQEGTPPAIVRRLSLAYFAPQTAFSIPAWISQAQGIRAGPQRLS</sequence>
<keyword id="KW-0963">Cytoplasm</keyword>
<keyword id="KW-0574">Periplasm</keyword>
<keyword id="KW-0732">Signal</keyword>
<dbReference type="EMBL" id="CP000026">
    <property type="protein sequence ID" value="AAV76170.1"/>
    <property type="status" value="ALT_INIT"/>
    <property type="molecule type" value="Genomic_DNA"/>
</dbReference>
<dbReference type="RefSeq" id="WP_000014336.1">
    <property type="nucleotide sequence ID" value="NC_006511.1"/>
</dbReference>
<dbReference type="SMR" id="Q5PDD0"/>
<dbReference type="KEGG" id="spt:SPA0137"/>
<dbReference type="HOGENOM" id="CLU_108853_0_0_6"/>
<dbReference type="Proteomes" id="UP000008185">
    <property type="component" value="Chromosome"/>
</dbReference>
<dbReference type="GO" id="GO:0005829">
    <property type="term" value="C:cytosol"/>
    <property type="evidence" value="ECO:0007669"/>
    <property type="project" value="UniProtKB-SubCell"/>
</dbReference>
<dbReference type="GO" id="GO:0042597">
    <property type="term" value="C:periplasmic space"/>
    <property type="evidence" value="ECO:0007669"/>
    <property type="project" value="UniProtKB-SubCell"/>
</dbReference>
<dbReference type="GO" id="GO:0045182">
    <property type="term" value="F:translation regulator activity"/>
    <property type="evidence" value="ECO:0007669"/>
    <property type="project" value="InterPro"/>
</dbReference>
<dbReference type="HAMAP" id="MF_01332">
    <property type="entry name" value="SecM"/>
    <property type="match status" value="1"/>
</dbReference>
<dbReference type="InterPro" id="IPR009502">
    <property type="entry name" value="SecM"/>
</dbReference>
<dbReference type="NCBIfam" id="NF002799">
    <property type="entry name" value="PRK02943.1-1"/>
    <property type="match status" value="1"/>
</dbReference>
<dbReference type="Pfam" id="PF06558">
    <property type="entry name" value="SecM"/>
    <property type="match status" value="1"/>
</dbReference>
<dbReference type="PIRSF" id="PIRSF004572">
    <property type="entry name" value="SecM"/>
    <property type="match status" value="1"/>
</dbReference>
<comment type="function">
    <text evidence="1">Regulates secA expression by translational coupling of the secM secA operon. Translational pausing at a specific Pro residue 5 residues before the end of the protein may allow disruption of a mRNA repressor helix that normally suppresses secA translation initiation.</text>
</comment>
<comment type="subcellular location">
    <subcellularLocation>
        <location evidence="1">Cytoplasm</location>
        <location evidence="1">Cytosol</location>
    </subcellularLocation>
    <subcellularLocation>
        <location evidence="1">Periplasm</location>
    </subcellularLocation>
    <text evidence="1">The active form is cytosolic, while the periplasmic form is rapidly degraded, mainly by the tail-specific protease.</text>
</comment>
<comment type="similarity">
    <text evidence="1">Belongs to the SecM family.</text>
</comment>
<comment type="sequence caution" evidence="2">
    <conflict type="erroneous initiation">
        <sequence resource="EMBL-CDS" id="AAV76170"/>
    </conflict>
</comment>
<evidence type="ECO:0000255" key="1">
    <source>
        <dbReference type="HAMAP-Rule" id="MF_01332"/>
    </source>
</evidence>
<evidence type="ECO:0000305" key="2"/>